<evidence type="ECO:0000255" key="1">
    <source>
        <dbReference type="HAMAP-Rule" id="MF_00374"/>
    </source>
</evidence>
<evidence type="ECO:0000256" key="2">
    <source>
        <dbReference type="SAM" id="MobiDB-lite"/>
    </source>
</evidence>
<evidence type="ECO:0000305" key="3"/>
<gene>
    <name evidence="1" type="primary">rpmC</name>
    <name type="ordered locus">MCAP_0688</name>
</gene>
<sequence>MAKSKMLDLRNLSVDELIKTNESKRAELFALKFQAAVGSLEQTHRIKEIKKEIARIELALSEKRLSGENTNKVIKADYNKAVEEAEKAGKEVRAKQRKFLEEQYGQQSQTKVNEADIQKAMQAAEQETVEPDTKGETK</sequence>
<dbReference type="EMBL" id="X06414">
    <property type="protein sequence ID" value="CAA29712.1"/>
    <property type="molecule type" value="Genomic_DNA"/>
</dbReference>
<dbReference type="EMBL" id="CP000123">
    <property type="protein sequence ID" value="ABC01318.1"/>
    <property type="molecule type" value="Genomic_DNA"/>
</dbReference>
<dbReference type="EMBL" id="Z33011">
    <property type="protein sequence ID" value="CAA83694.1"/>
    <property type="molecule type" value="Genomic_DNA"/>
</dbReference>
<dbReference type="PIR" id="S02839">
    <property type="entry name" value="R5YM29"/>
</dbReference>
<dbReference type="PIR" id="S77861">
    <property type="entry name" value="S77861"/>
</dbReference>
<dbReference type="RefSeq" id="WP_011387539.1">
    <property type="nucleotide sequence ID" value="NC_007633.1"/>
</dbReference>
<dbReference type="SMR" id="P10142"/>
<dbReference type="GeneID" id="23778358"/>
<dbReference type="KEGG" id="mcp:MCAP_0688"/>
<dbReference type="HOGENOM" id="CLU_1842756_0_0_14"/>
<dbReference type="PhylomeDB" id="P10142"/>
<dbReference type="Proteomes" id="UP000001928">
    <property type="component" value="Chromosome"/>
</dbReference>
<dbReference type="GO" id="GO:1990904">
    <property type="term" value="C:ribonucleoprotein complex"/>
    <property type="evidence" value="ECO:0007669"/>
    <property type="project" value="UniProtKB-KW"/>
</dbReference>
<dbReference type="GO" id="GO:0005840">
    <property type="term" value="C:ribosome"/>
    <property type="evidence" value="ECO:0007669"/>
    <property type="project" value="UniProtKB-KW"/>
</dbReference>
<dbReference type="GO" id="GO:0003735">
    <property type="term" value="F:structural constituent of ribosome"/>
    <property type="evidence" value="ECO:0007669"/>
    <property type="project" value="InterPro"/>
</dbReference>
<dbReference type="GO" id="GO:0006412">
    <property type="term" value="P:translation"/>
    <property type="evidence" value="ECO:0007669"/>
    <property type="project" value="UniProtKB-UniRule"/>
</dbReference>
<dbReference type="CDD" id="cd00427">
    <property type="entry name" value="Ribosomal_L29_HIP"/>
    <property type="match status" value="1"/>
</dbReference>
<dbReference type="Gene3D" id="1.10.287.310">
    <property type="match status" value="1"/>
</dbReference>
<dbReference type="HAMAP" id="MF_00374">
    <property type="entry name" value="Ribosomal_uL29"/>
    <property type="match status" value="1"/>
</dbReference>
<dbReference type="InterPro" id="IPR001854">
    <property type="entry name" value="Ribosomal_uL29"/>
</dbReference>
<dbReference type="InterPro" id="IPR018254">
    <property type="entry name" value="Ribosomal_uL29_CS"/>
</dbReference>
<dbReference type="InterPro" id="IPR036049">
    <property type="entry name" value="Ribosomal_uL29_sf"/>
</dbReference>
<dbReference type="NCBIfam" id="TIGR00012">
    <property type="entry name" value="L29"/>
    <property type="match status" value="1"/>
</dbReference>
<dbReference type="Pfam" id="PF00831">
    <property type="entry name" value="Ribosomal_L29"/>
    <property type="match status" value="1"/>
</dbReference>
<dbReference type="SUPFAM" id="SSF46561">
    <property type="entry name" value="Ribosomal protein L29 (L29p)"/>
    <property type="match status" value="1"/>
</dbReference>
<dbReference type="PROSITE" id="PS00579">
    <property type="entry name" value="RIBOSOMAL_L29"/>
    <property type="match status" value="1"/>
</dbReference>
<proteinExistence type="inferred from homology"/>
<organism>
    <name type="scientific">Mycoplasma capricolum subsp. capricolum (strain California kid / ATCC 27343 / NCTC 10154)</name>
    <dbReference type="NCBI Taxonomy" id="340047"/>
    <lineage>
        <taxon>Bacteria</taxon>
        <taxon>Bacillati</taxon>
        <taxon>Mycoplasmatota</taxon>
        <taxon>Mollicutes</taxon>
        <taxon>Mycoplasmataceae</taxon>
        <taxon>Mycoplasma</taxon>
    </lineage>
</organism>
<reference key="1">
    <citation type="journal article" date="1987" name="Mol. Gen. Genet.">
        <title>The ribosomal protein gene cluster of Mycoplasma capricolum.</title>
        <authorList>
            <person name="Ohkubo S."/>
            <person name="Muto A."/>
            <person name="Kawauchi Y."/>
            <person name="Yamao F."/>
            <person name="Osawa S."/>
        </authorList>
    </citation>
    <scope>NUCLEOTIDE SEQUENCE [GENOMIC DNA]</scope>
    <source>
        <strain>California kid / ATCC 27343 / NCTC 10154</strain>
    </source>
</reference>
<reference key="2">
    <citation type="submission" date="2005-09" db="EMBL/GenBank/DDBJ databases">
        <authorList>
            <person name="Glass J.I."/>
            <person name="Lartigue C."/>
            <person name="Pfannkoch C."/>
            <person name="Baden-Tillson H."/>
            <person name="Smith H.O."/>
            <person name="Venter J.C."/>
            <person name="Roske K."/>
            <person name="Wise K.S."/>
            <person name="Calcutt M.J."/>
            <person name="Nelson W.C."/>
            <person name="Nierman W.C."/>
        </authorList>
    </citation>
    <scope>NUCLEOTIDE SEQUENCE [LARGE SCALE GENOMIC DNA]</scope>
    <source>
        <strain>California kid / ATCC 27343 / NCTC 10154</strain>
    </source>
</reference>
<reference key="3">
    <citation type="journal article" date="1995" name="Mol. Microbiol.">
        <title>Exploring the Mycoplasma capricolum genome: a minimal cell reveals its physiology.</title>
        <authorList>
            <person name="Bork P."/>
            <person name="Ouzounis C."/>
            <person name="Casari G."/>
            <person name="Schneider R."/>
            <person name="Sander C."/>
            <person name="Dolan M."/>
            <person name="Gilbert W."/>
            <person name="Gillevet P.M."/>
        </authorList>
    </citation>
    <scope>NUCLEOTIDE SEQUENCE [GENOMIC DNA] OF 6-92</scope>
    <source>
        <strain>California kid / ATCC 27343 / NCTC 10154</strain>
    </source>
</reference>
<protein>
    <recommendedName>
        <fullName evidence="1">Large ribosomal subunit protein uL29</fullName>
    </recommendedName>
    <alternativeName>
        <fullName>50S ribosomal protein L29</fullName>
    </alternativeName>
</protein>
<comment type="similarity">
    <text evidence="1">Belongs to the universal ribosomal protein uL29 family.</text>
</comment>
<keyword id="KW-0687">Ribonucleoprotein</keyword>
<keyword id="KW-0689">Ribosomal protein</keyword>
<accession>P10142</accession>
<accession>Q2SRG1</accession>
<accession>Q48956</accession>
<feature type="chain" id="PRO_0000130418" description="Large ribosomal subunit protein uL29">
    <location>
        <begin position="1"/>
        <end position="138"/>
    </location>
</feature>
<feature type="region of interest" description="Large ribosomal subunit protein uL29">
    <location>
        <begin position="1"/>
        <end position="79"/>
    </location>
</feature>
<feature type="region of interest" description="Unknown">
    <location>
        <begin position="80"/>
        <end position="138"/>
    </location>
</feature>
<feature type="region of interest" description="Disordered" evidence="2">
    <location>
        <begin position="103"/>
        <end position="138"/>
    </location>
</feature>
<feature type="sequence conflict" description="In Ref. 1; CAA29712." evidence="3" ref="1">
    <original>R</original>
    <variation>E</variation>
    <location>
        <position position="10"/>
    </location>
</feature>
<feature type="sequence conflict" description="In Ref. 3; CAA83694." evidence="3" ref="3">
    <original>AEKAGKEV</original>
    <variation>VRKSGKRS</variation>
    <location>
        <begin position="85"/>
        <end position="92"/>
    </location>
</feature>
<name>RL29_MYCCT</name>